<protein>
    <recommendedName>
        <fullName evidence="1">UPF0060 membrane protein Nham_2004</fullName>
    </recommendedName>
</protein>
<feature type="chain" id="PRO_0000282239" description="UPF0060 membrane protein Nham_2004">
    <location>
        <begin position="1"/>
        <end position="108"/>
    </location>
</feature>
<feature type="transmembrane region" description="Helical" evidence="1">
    <location>
        <begin position="5"/>
        <end position="25"/>
    </location>
</feature>
<feature type="transmembrane region" description="Helical" evidence="1">
    <location>
        <begin position="31"/>
        <end position="51"/>
    </location>
</feature>
<feature type="transmembrane region" description="Helical" evidence="1">
    <location>
        <begin position="61"/>
        <end position="81"/>
    </location>
</feature>
<feature type="transmembrane region" description="Helical" evidence="1">
    <location>
        <begin position="88"/>
        <end position="108"/>
    </location>
</feature>
<proteinExistence type="inferred from homology"/>
<name>Y2004_NITHX</name>
<gene>
    <name type="ordered locus">Nham_2004</name>
</gene>
<sequence>MITSAAYVGAAVAEIAGCFAFWAWLRLGKSVWWLAPGMVSLALFAYLLTLVDSEAAGRAYAAYGGVYIIASLGWLWSVEGLRPDRWDLTGAAICLLGAAIILFGPRQI</sequence>
<dbReference type="EMBL" id="CP000319">
    <property type="protein sequence ID" value="ABE62803.1"/>
    <property type="status" value="ALT_INIT"/>
    <property type="molecule type" value="Genomic_DNA"/>
</dbReference>
<dbReference type="RefSeq" id="WP_041357945.1">
    <property type="nucleotide sequence ID" value="NC_007964.1"/>
</dbReference>
<dbReference type="SMR" id="Q1QLU4"/>
<dbReference type="KEGG" id="nha:Nham_2004"/>
<dbReference type="eggNOG" id="COG1742">
    <property type="taxonomic scope" value="Bacteria"/>
</dbReference>
<dbReference type="HOGENOM" id="CLU_117653_1_0_5"/>
<dbReference type="OrthoDB" id="123240at2"/>
<dbReference type="Proteomes" id="UP000001953">
    <property type="component" value="Chromosome"/>
</dbReference>
<dbReference type="GO" id="GO:0005886">
    <property type="term" value="C:plasma membrane"/>
    <property type="evidence" value="ECO:0007669"/>
    <property type="project" value="UniProtKB-SubCell"/>
</dbReference>
<dbReference type="HAMAP" id="MF_00010">
    <property type="entry name" value="UPF0060"/>
    <property type="match status" value="1"/>
</dbReference>
<dbReference type="InterPro" id="IPR003844">
    <property type="entry name" value="UPF0060"/>
</dbReference>
<dbReference type="NCBIfam" id="NF002586">
    <property type="entry name" value="PRK02237.1"/>
    <property type="match status" value="1"/>
</dbReference>
<dbReference type="PANTHER" id="PTHR36116">
    <property type="entry name" value="UPF0060 MEMBRANE PROTEIN YNFA"/>
    <property type="match status" value="1"/>
</dbReference>
<dbReference type="PANTHER" id="PTHR36116:SF1">
    <property type="entry name" value="UPF0060 MEMBRANE PROTEIN YNFA"/>
    <property type="match status" value="1"/>
</dbReference>
<dbReference type="Pfam" id="PF02694">
    <property type="entry name" value="UPF0060"/>
    <property type="match status" value="1"/>
</dbReference>
<dbReference type="SUPFAM" id="SSF103481">
    <property type="entry name" value="Multidrug resistance efflux transporter EmrE"/>
    <property type="match status" value="1"/>
</dbReference>
<keyword id="KW-0997">Cell inner membrane</keyword>
<keyword id="KW-1003">Cell membrane</keyword>
<keyword id="KW-0472">Membrane</keyword>
<keyword id="KW-1185">Reference proteome</keyword>
<keyword id="KW-0812">Transmembrane</keyword>
<keyword id="KW-1133">Transmembrane helix</keyword>
<reference key="1">
    <citation type="submission" date="2006-03" db="EMBL/GenBank/DDBJ databases">
        <title>Complete sequence of chromosome of Nitrobacter hamburgensis X14.</title>
        <authorList>
            <consortium name="US DOE Joint Genome Institute"/>
            <person name="Copeland A."/>
            <person name="Lucas S."/>
            <person name="Lapidus A."/>
            <person name="Barry K."/>
            <person name="Detter J.C."/>
            <person name="Glavina del Rio T."/>
            <person name="Hammon N."/>
            <person name="Israni S."/>
            <person name="Dalin E."/>
            <person name="Tice H."/>
            <person name="Pitluck S."/>
            <person name="Chain P."/>
            <person name="Malfatti S."/>
            <person name="Shin M."/>
            <person name="Vergez L."/>
            <person name="Schmutz J."/>
            <person name="Larimer F."/>
            <person name="Land M."/>
            <person name="Hauser L."/>
            <person name="Kyrpides N."/>
            <person name="Ivanova N."/>
            <person name="Ward B."/>
            <person name="Arp D."/>
            <person name="Klotz M."/>
            <person name="Stein L."/>
            <person name="O'Mullan G."/>
            <person name="Starkenburg S."/>
            <person name="Sayavedra L."/>
            <person name="Poret-Peterson A.T."/>
            <person name="Gentry M.E."/>
            <person name="Bruce D."/>
            <person name="Richardson P."/>
        </authorList>
    </citation>
    <scope>NUCLEOTIDE SEQUENCE [LARGE SCALE GENOMIC DNA]</scope>
    <source>
        <strain>DSM 10229 / NCIMB 13809 / X14</strain>
    </source>
</reference>
<organism>
    <name type="scientific">Nitrobacter hamburgensis (strain DSM 10229 / NCIMB 13809 / X14)</name>
    <dbReference type="NCBI Taxonomy" id="323097"/>
    <lineage>
        <taxon>Bacteria</taxon>
        <taxon>Pseudomonadati</taxon>
        <taxon>Pseudomonadota</taxon>
        <taxon>Alphaproteobacteria</taxon>
        <taxon>Hyphomicrobiales</taxon>
        <taxon>Nitrobacteraceae</taxon>
        <taxon>Nitrobacter</taxon>
    </lineage>
</organism>
<accession>Q1QLU4</accession>
<comment type="subcellular location">
    <subcellularLocation>
        <location evidence="1">Cell inner membrane</location>
        <topology evidence="1">Multi-pass membrane protein</topology>
    </subcellularLocation>
</comment>
<comment type="similarity">
    <text evidence="1">Belongs to the UPF0060 family.</text>
</comment>
<comment type="sequence caution" evidence="2">
    <conflict type="erroneous initiation">
        <sequence resource="EMBL-CDS" id="ABE62803"/>
    </conflict>
</comment>
<evidence type="ECO:0000255" key="1">
    <source>
        <dbReference type="HAMAP-Rule" id="MF_00010"/>
    </source>
</evidence>
<evidence type="ECO:0000305" key="2"/>